<accession>A0AFU3</accession>
<gene>
    <name evidence="1" type="primary">rpmF1</name>
    <name type="ordered locus">lwe0457</name>
</gene>
<keyword id="KW-0687">Ribonucleoprotein</keyword>
<keyword id="KW-0689">Ribosomal protein</keyword>
<evidence type="ECO:0000255" key="1">
    <source>
        <dbReference type="HAMAP-Rule" id="MF_00340"/>
    </source>
</evidence>
<evidence type="ECO:0000256" key="2">
    <source>
        <dbReference type="SAM" id="MobiDB-lite"/>
    </source>
</evidence>
<evidence type="ECO:0000305" key="3"/>
<dbReference type="EMBL" id="AM263198">
    <property type="protein sequence ID" value="CAK19875.1"/>
    <property type="molecule type" value="Genomic_DNA"/>
</dbReference>
<dbReference type="SMR" id="A0AFU3"/>
<dbReference type="STRING" id="386043.lwe0457"/>
<dbReference type="KEGG" id="lwe:lwe0457"/>
<dbReference type="eggNOG" id="COG0333">
    <property type="taxonomic scope" value="Bacteria"/>
</dbReference>
<dbReference type="HOGENOM" id="CLU_129084_1_3_9"/>
<dbReference type="OrthoDB" id="9812874at2"/>
<dbReference type="Proteomes" id="UP000000779">
    <property type="component" value="Chromosome"/>
</dbReference>
<dbReference type="GO" id="GO:0015934">
    <property type="term" value="C:large ribosomal subunit"/>
    <property type="evidence" value="ECO:0007669"/>
    <property type="project" value="InterPro"/>
</dbReference>
<dbReference type="GO" id="GO:0003735">
    <property type="term" value="F:structural constituent of ribosome"/>
    <property type="evidence" value="ECO:0007669"/>
    <property type="project" value="InterPro"/>
</dbReference>
<dbReference type="GO" id="GO:0006412">
    <property type="term" value="P:translation"/>
    <property type="evidence" value="ECO:0007669"/>
    <property type="project" value="UniProtKB-UniRule"/>
</dbReference>
<dbReference type="HAMAP" id="MF_00340">
    <property type="entry name" value="Ribosomal_bL32"/>
    <property type="match status" value="1"/>
</dbReference>
<dbReference type="InterPro" id="IPR002677">
    <property type="entry name" value="Ribosomal_bL32"/>
</dbReference>
<dbReference type="InterPro" id="IPR044957">
    <property type="entry name" value="Ribosomal_bL32_bact"/>
</dbReference>
<dbReference type="InterPro" id="IPR011332">
    <property type="entry name" value="Ribosomal_zn-bd"/>
</dbReference>
<dbReference type="NCBIfam" id="TIGR01031">
    <property type="entry name" value="rpmF_bact"/>
    <property type="match status" value="1"/>
</dbReference>
<dbReference type="PANTHER" id="PTHR35534">
    <property type="entry name" value="50S RIBOSOMAL PROTEIN L32"/>
    <property type="match status" value="1"/>
</dbReference>
<dbReference type="PANTHER" id="PTHR35534:SF1">
    <property type="entry name" value="LARGE RIBOSOMAL SUBUNIT PROTEIN BL32"/>
    <property type="match status" value="1"/>
</dbReference>
<dbReference type="Pfam" id="PF01783">
    <property type="entry name" value="Ribosomal_L32p"/>
    <property type="match status" value="1"/>
</dbReference>
<dbReference type="SUPFAM" id="SSF57829">
    <property type="entry name" value="Zn-binding ribosomal proteins"/>
    <property type="match status" value="1"/>
</dbReference>
<protein>
    <recommendedName>
        <fullName evidence="1">Large ribosomal subunit protein bL32A</fullName>
    </recommendedName>
    <alternativeName>
        <fullName evidence="3">50S ribosomal protein L32 1</fullName>
    </alternativeName>
</protein>
<feature type="chain" id="PRO_0000296493" description="Large ribosomal subunit protein bL32A">
    <location>
        <begin position="1"/>
        <end position="56"/>
    </location>
</feature>
<feature type="region of interest" description="Disordered" evidence="2">
    <location>
        <begin position="1"/>
        <end position="56"/>
    </location>
</feature>
<feature type="compositionally biased region" description="Basic residues" evidence="2">
    <location>
        <begin position="7"/>
        <end position="20"/>
    </location>
</feature>
<feature type="compositionally biased region" description="Basic and acidic residues" evidence="2">
    <location>
        <begin position="29"/>
        <end position="38"/>
    </location>
</feature>
<sequence length="56" mass="6327">MAVPARRTSKAKKNKRRTHKGLTAPGLSRDSETGEYRMSHRISPDGTYKGRTIIEK</sequence>
<name>RL321_LISW6</name>
<proteinExistence type="inferred from homology"/>
<reference key="1">
    <citation type="journal article" date="2006" name="J. Bacteriol.">
        <title>Whole-genome sequence of Listeria welshimeri reveals common steps in genome reduction with Listeria innocua as compared to Listeria monocytogenes.</title>
        <authorList>
            <person name="Hain T."/>
            <person name="Steinweg C."/>
            <person name="Kuenne C.T."/>
            <person name="Billion A."/>
            <person name="Ghai R."/>
            <person name="Chatterjee S.S."/>
            <person name="Domann E."/>
            <person name="Kaerst U."/>
            <person name="Goesmann A."/>
            <person name="Bekel T."/>
            <person name="Bartels D."/>
            <person name="Kaiser O."/>
            <person name="Meyer F."/>
            <person name="Puehler A."/>
            <person name="Weisshaar B."/>
            <person name="Wehland J."/>
            <person name="Liang C."/>
            <person name="Dandekar T."/>
            <person name="Lampidis R."/>
            <person name="Kreft J."/>
            <person name="Goebel W."/>
            <person name="Chakraborty T."/>
        </authorList>
    </citation>
    <scope>NUCLEOTIDE SEQUENCE [LARGE SCALE GENOMIC DNA]</scope>
    <source>
        <strain>ATCC 35897 / DSM 20650 / CCUG 15529 / CIP 8149 / NCTC 11857 / SLCC 5334 / V8</strain>
    </source>
</reference>
<comment type="similarity">
    <text evidence="1">Belongs to the bacterial ribosomal protein bL32 family.</text>
</comment>
<organism>
    <name type="scientific">Listeria welshimeri serovar 6b (strain ATCC 35897 / DSM 20650 / CCUG 15529 / CIP 8149 / NCTC 11857 / SLCC 5334 / V8)</name>
    <dbReference type="NCBI Taxonomy" id="386043"/>
    <lineage>
        <taxon>Bacteria</taxon>
        <taxon>Bacillati</taxon>
        <taxon>Bacillota</taxon>
        <taxon>Bacilli</taxon>
        <taxon>Bacillales</taxon>
        <taxon>Listeriaceae</taxon>
        <taxon>Listeria</taxon>
    </lineage>
</organism>